<organism>
    <name type="scientific">Citrobacter koseri (strain ATCC BAA-895 / CDC 4225-83 / SGSC4696)</name>
    <dbReference type="NCBI Taxonomy" id="290338"/>
    <lineage>
        <taxon>Bacteria</taxon>
        <taxon>Pseudomonadati</taxon>
        <taxon>Pseudomonadota</taxon>
        <taxon>Gammaproteobacteria</taxon>
        <taxon>Enterobacterales</taxon>
        <taxon>Enterobacteriaceae</taxon>
        <taxon>Citrobacter</taxon>
    </lineage>
</organism>
<gene>
    <name evidence="1" type="primary">mug</name>
    <name type="ordered locus">CKO_04467</name>
</gene>
<evidence type="ECO:0000255" key="1">
    <source>
        <dbReference type="HAMAP-Rule" id="MF_01956"/>
    </source>
</evidence>
<feature type="chain" id="PRO_1000070786" description="G/U mismatch-specific DNA glycosylase">
    <location>
        <begin position="1"/>
        <end position="168"/>
    </location>
</feature>
<keyword id="KW-0963">Cytoplasm</keyword>
<keyword id="KW-0227">DNA damage</keyword>
<keyword id="KW-0228">DNA excision</keyword>
<keyword id="KW-0234">DNA repair</keyword>
<keyword id="KW-0238">DNA-binding</keyword>
<keyword id="KW-0378">Hydrolase</keyword>
<keyword id="KW-1185">Reference proteome</keyword>
<sequence length="168" mass="18810">MVKDILARELRVVFCGINPGLSSAGTGFPFAHPANRFWKVIHLAGFTGRQLKPEEAQHLLDFRCGVTKFVDRPTVQANEVKLQEMRSGGHKLIEKIEHYQPAALAILGKQAFEQGFSQRGAQWGKQTMTIGDTQIWVLPNPSGLNRIRTEKLVEAYRELDESLVVDGL</sequence>
<comment type="function">
    <text evidence="1">Excises ethenocytosine and uracil, which can arise by alkylation or deamination of cytosine, respectively, from the corresponding mispairs with guanine in ds-DNA. It is capable of hydrolyzing the carbon-nitrogen bond between the sugar-phosphate backbone of the DNA and the mispaired base. The complementary strand guanine functions in substrate recognition. Required for DNA damage lesion repair in stationary-phase cells.</text>
</comment>
<comment type="catalytic activity">
    <reaction evidence="1">
        <text>Specifically hydrolyzes mismatched double-stranded DNA and polynucleotides, releasing free uracil.</text>
        <dbReference type="EC" id="3.2.2.28"/>
    </reaction>
</comment>
<comment type="subunit">
    <text evidence="1">Binds DNA as a monomer.</text>
</comment>
<comment type="subcellular location">
    <subcellularLocation>
        <location evidence="1">Cytoplasm</location>
    </subcellularLocation>
</comment>
<comment type="similarity">
    <text evidence="1">Belongs to the uracil-DNA glycosylase (UDG) superfamily. TDG/mug family.</text>
</comment>
<proteinExistence type="inferred from homology"/>
<name>MUG_CITK8</name>
<protein>
    <recommendedName>
        <fullName evidence="1">G/U mismatch-specific DNA glycosylase</fullName>
        <ecNumber evidence="1">3.2.2.28</ecNumber>
    </recommendedName>
    <alternativeName>
        <fullName evidence="1">Double-strand-specific uracil glycosylase</fullName>
    </alternativeName>
    <alternativeName>
        <fullName evidence="1">Mismatch-specific uracil DNA-glycosylase</fullName>
        <shortName evidence="1">MUG</shortName>
    </alternativeName>
</protein>
<reference key="1">
    <citation type="submission" date="2007-08" db="EMBL/GenBank/DDBJ databases">
        <authorList>
            <consortium name="The Citrobacter koseri Genome Sequencing Project"/>
            <person name="McClelland M."/>
            <person name="Sanderson E.K."/>
            <person name="Porwollik S."/>
            <person name="Spieth J."/>
            <person name="Clifton W.S."/>
            <person name="Latreille P."/>
            <person name="Courtney L."/>
            <person name="Wang C."/>
            <person name="Pepin K."/>
            <person name="Bhonagiri V."/>
            <person name="Nash W."/>
            <person name="Johnson M."/>
            <person name="Thiruvilangam P."/>
            <person name="Wilson R."/>
        </authorList>
    </citation>
    <scope>NUCLEOTIDE SEQUENCE [LARGE SCALE GENOMIC DNA]</scope>
    <source>
        <strain>ATCC BAA-895 / CDC 4225-83 / SGSC4696</strain>
    </source>
</reference>
<dbReference type="EC" id="3.2.2.28" evidence="1"/>
<dbReference type="EMBL" id="CP000822">
    <property type="protein sequence ID" value="ABV15523.1"/>
    <property type="molecule type" value="Genomic_DNA"/>
</dbReference>
<dbReference type="RefSeq" id="WP_012135205.1">
    <property type="nucleotide sequence ID" value="NC_009792.1"/>
</dbReference>
<dbReference type="SMR" id="A8APW0"/>
<dbReference type="STRING" id="290338.CKO_04467"/>
<dbReference type="GeneID" id="45138034"/>
<dbReference type="KEGG" id="cko:CKO_04467"/>
<dbReference type="HOGENOM" id="CLU_042829_3_1_6"/>
<dbReference type="OrthoDB" id="9799921at2"/>
<dbReference type="Proteomes" id="UP000008148">
    <property type="component" value="Chromosome"/>
</dbReference>
<dbReference type="GO" id="GO:0005737">
    <property type="term" value="C:cytoplasm"/>
    <property type="evidence" value="ECO:0007669"/>
    <property type="project" value="UniProtKB-SubCell"/>
</dbReference>
<dbReference type="GO" id="GO:0003677">
    <property type="term" value="F:DNA binding"/>
    <property type="evidence" value="ECO:0007669"/>
    <property type="project" value="UniProtKB-KW"/>
</dbReference>
<dbReference type="GO" id="GO:0008263">
    <property type="term" value="F:pyrimidine-specific mismatch base pair DNA N-glycosylase activity"/>
    <property type="evidence" value="ECO:0007669"/>
    <property type="project" value="UniProtKB-UniRule"/>
</dbReference>
<dbReference type="GO" id="GO:0004844">
    <property type="term" value="F:uracil DNA N-glycosylase activity"/>
    <property type="evidence" value="ECO:0007669"/>
    <property type="project" value="TreeGrafter"/>
</dbReference>
<dbReference type="GO" id="GO:0006285">
    <property type="term" value="P:base-excision repair, AP site formation"/>
    <property type="evidence" value="ECO:0007669"/>
    <property type="project" value="UniProtKB-UniRule"/>
</dbReference>
<dbReference type="CDD" id="cd10028">
    <property type="entry name" value="UDG-F2_TDG_MUG"/>
    <property type="match status" value="1"/>
</dbReference>
<dbReference type="Gene3D" id="3.40.470.10">
    <property type="entry name" value="Uracil-DNA glycosylase-like domain"/>
    <property type="match status" value="1"/>
</dbReference>
<dbReference type="HAMAP" id="MF_01956">
    <property type="entry name" value="MUG"/>
    <property type="match status" value="1"/>
</dbReference>
<dbReference type="InterPro" id="IPR015637">
    <property type="entry name" value="MUG/TDG"/>
</dbReference>
<dbReference type="InterPro" id="IPR023502">
    <property type="entry name" value="MUG_bact"/>
</dbReference>
<dbReference type="InterPro" id="IPR005122">
    <property type="entry name" value="Uracil-DNA_glycosylase-like"/>
</dbReference>
<dbReference type="InterPro" id="IPR036895">
    <property type="entry name" value="Uracil-DNA_glycosylase-like_sf"/>
</dbReference>
<dbReference type="NCBIfam" id="NF007570">
    <property type="entry name" value="PRK10201.1"/>
    <property type="match status" value="1"/>
</dbReference>
<dbReference type="PANTHER" id="PTHR12159">
    <property type="entry name" value="G/T AND G/U MISMATCH-SPECIFIC DNA GLYCOSYLASE"/>
    <property type="match status" value="1"/>
</dbReference>
<dbReference type="PANTHER" id="PTHR12159:SF9">
    <property type="entry name" value="G_T MISMATCH-SPECIFIC THYMINE DNA GLYCOSYLASE"/>
    <property type="match status" value="1"/>
</dbReference>
<dbReference type="Pfam" id="PF03167">
    <property type="entry name" value="UDG"/>
    <property type="match status" value="1"/>
</dbReference>
<dbReference type="SUPFAM" id="SSF52141">
    <property type="entry name" value="Uracil-DNA glycosylase-like"/>
    <property type="match status" value="1"/>
</dbReference>
<accession>A8APW0</accession>